<protein>
    <recommendedName>
        <fullName evidence="1">Ribulose bisphosphate carboxylase large chain</fullName>
        <shortName evidence="1">RuBisCO large subunit</shortName>
        <ecNumber evidence="1">4.1.1.39</ecNumber>
    </recommendedName>
</protein>
<accession>Q32256</accession>
<organism>
    <name type="scientific">Galium aparine</name>
    <name type="common">Catchweed bedstraw</name>
    <name type="synonym">Cleavers</name>
    <dbReference type="NCBI Taxonomy" id="29788"/>
    <lineage>
        <taxon>Eukaryota</taxon>
        <taxon>Viridiplantae</taxon>
        <taxon>Streptophyta</taxon>
        <taxon>Embryophyta</taxon>
        <taxon>Tracheophyta</taxon>
        <taxon>Spermatophyta</taxon>
        <taxon>Magnoliopsida</taxon>
        <taxon>eudicotyledons</taxon>
        <taxon>Gunneridae</taxon>
        <taxon>Pentapetalae</taxon>
        <taxon>asterids</taxon>
        <taxon>lamiids</taxon>
        <taxon>Gentianales</taxon>
        <taxon>Rubiaceae</taxon>
        <taxon>Rubioideae</taxon>
        <taxon>Rubieae</taxon>
        <taxon>Galium</taxon>
    </lineage>
</organism>
<keyword id="KW-0007">Acetylation</keyword>
<keyword id="KW-0113">Calvin cycle</keyword>
<keyword id="KW-0120">Carbon dioxide fixation</keyword>
<keyword id="KW-0150">Chloroplast</keyword>
<keyword id="KW-1015">Disulfide bond</keyword>
<keyword id="KW-0456">Lyase</keyword>
<keyword id="KW-0460">Magnesium</keyword>
<keyword id="KW-0479">Metal-binding</keyword>
<keyword id="KW-0488">Methylation</keyword>
<keyword id="KW-0503">Monooxygenase</keyword>
<keyword id="KW-0560">Oxidoreductase</keyword>
<keyword id="KW-0601">Photorespiration</keyword>
<keyword id="KW-0602">Photosynthesis</keyword>
<keyword id="KW-0934">Plastid</keyword>
<name>RBL_GALAP</name>
<sequence>MSPQTETKAGVGFKAGVKEYKLTYYTPEYETKDTDILAAFRVTPQPGVPPEERGAAVAAESSTGTWTTVWTDGLTSLDRYKGRCYHIEPVPGEEEQFIAYVAYPLDLFEEGSVTNMFTSIVGNVFGFKALRALRLEDLRIPVAYVKTFQGPPHGIQVERDKLNKYGRPLLGCTIKPKLGLSAKNYGRAVYECLRGGLDFTKDDENVNSQPFMRWRDRFLFCAEAIYKSQAETGEIKGHYLNATAGTCEEMIKRAVFARELGVPIVMHDYLTGGFTANTTLSHYCRDNGLLLHIHRAMHAVIDRQKNHGMHFRVLAKALRMSGGDHIHSGTVVGKLEGERDITLGFVDLLRDDYIEKDRSRGIYFTQDWVSLPGVLPVASRGIHVWHMPALTEIFGDDSVLQFGGGTLGHPWGNAPGAVANRVALEACVKARNEGRDLAVEGGEIIREACKWSP</sequence>
<comment type="function">
    <text evidence="1">RuBisCO catalyzes two reactions: the carboxylation of D-ribulose 1,5-bisphosphate, the primary event in carbon dioxide fixation, as well as the oxidative fragmentation of the pentose substrate in the photorespiration process. Both reactions occur simultaneously and in competition at the same active site.</text>
</comment>
<comment type="catalytic activity">
    <reaction evidence="1">
        <text>2 (2R)-3-phosphoglycerate + 2 H(+) = D-ribulose 1,5-bisphosphate + CO2 + H2O</text>
        <dbReference type="Rhea" id="RHEA:23124"/>
        <dbReference type="ChEBI" id="CHEBI:15377"/>
        <dbReference type="ChEBI" id="CHEBI:15378"/>
        <dbReference type="ChEBI" id="CHEBI:16526"/>
        <dbReference type="ChEBI" id="CHEBI:57870"/>
        <dbReference type="ChEBI" id="CHEBI:58272"/>
        <dbReference type="EC" id="4.1.1.39"/>
    </reaction>
</comment>
<comment type="catalytic activity">
    <reaction evidence="1">
        <text>D-ribulose 1,5-bisphosphate + O2 = 2-phosphoglycolate + (2R)-3-phosphoglycerate + 2 H(+)</text>
        <dbReference type="Rhea" id="RHEA:36631"/>
        <dbReference type="ChEBI" id="CHEBI:15378"/>
        <dbReference type="ChEBI" id="CHEBI:15379"/>
        <dbReference type="ChEBI" id="CHEBI:57870"/>
        <dbReference type="ChEBI" id="CHEBI:58033"/>
        <dbReference type="ChEBI" id="CHEBI:58272"/>
    </reaction>
</comment>
<comment type="cofactor">
    <cofactor evidence="1">
        <name>Mg(2+)</name>
        <dbReference type="ChEBI" id="CHEBI:18420"/>
    </cofactor>
    <text evidence="1">Binds 1 Mg(2+) ion per subunit.</text>
</comment>
<comment type="subunit">
    <text evidence="1">Heterohexadecamer of 8 large chains and 8 small chains; disulfide-linked. The disulfide link is formed within the large subunit homodimers.</text>
</comment>
<comment type="subcellular location">
    <subcellularLocation>
        <location>Plastid</location>
        <location>Chloroplast</location>
    </subcellularLocation>
</comment>
<comment type="PTM">
    <text evidence="1">The disulfide bond which can form in the large chain dimeric partners within the hexadecamer appears to be associated with oxidative stress and protein turnover.</text>
</comment>
<comment type="miscellaneous">
    <text evidence="1">The basic functional RuBisCO is composed of a large chain homodimer in a 'head-to-tail' conformation. In form I RuBisCO this homodimer is arranged in a barrel-like tetramer with the small subunits forming a tetrameric 'cap' on each end of the 'barrel'.</text>
</comment>
<comment type="similarity">
    <text evidence="1">Belongs to the RuBisCO large chain family. Type I subfamily.</text>
</comment>
<evidence type="ECO:0000255" key="1">
    <source>
        <dbReference type="HAMAP-Rule" id="MF_01338"/>
    </source>
</evidence>
<proteinExistence type="inferred from homology"/>
<feature type="propeptide" id="PRO_0000031227" evidence="1">
    <location>
        <begin position="1"/>
        <end position="2"/>
    </location>
</feature>
<feature type="chain" id="PRO_0000031228" description="Ribulose bisphosphate carboxylase large chain">
    <location>
        <begin position="3"/>
        <end position="453" status="greater than"/>
    </location>
</feature>
<feature type="active site" description="Proton acceptor" evidence="1">
    <location>
        <position position="175"/>
    </location>
</feature>
<feature type="active site" description="Proton acceptor" evidence="1">
    <location>
        <position position="294"/>
    </location>
</feature>
<feature type="binding site" description="in homodimeric partner" evidence="1">
    <location>
        <position position="123"/>
    </location>
    <ligand>
        <name>substrate</name>
    </ligand>
</feature>
<feature type="binding site" evidence="1">
    <location>
        <position position="173"/>
    </location>
    <ligand>
        <name>substrate</name>
    </ligand>
</feature>
<feature type="binding site" evidence="1">
    <location>
        <position position="177"/>
    </location>
    <ligand>
        <name>substrate</name>
    </ligand>
</feature>
<feature type="binding site" description="via carbamate group" evidence="1">
    <location>
        <position position="201"/>
    </location>
    <ligand>
        <name>Mg(2+)</name>
        <dbReference type="ChEBI" id="CHEBI:18420"/>
    </ligand>
</feature>
<feature type="binding site" evidence="1">
    <location>
        <position position="203"/>
    </location>
    <ligand>
        <name>Mg(2+)</name>
        <dbReference type="ChEBI" id="CHEBI:18420"/>
    </ligand>
</feature>
<feature type="binding site" evidence="1">
    <location>
        <position position="204"/>
    </location>
    <ligand>
        <name>Mg(2+)</name>
        <dbReference type="ChEBI" id="CHEBI:18420"/>
    </ligand>
</feature>
<feature type="binding site" evidence="1">
    <location>
        <position position="295"/>
    </location>
    <ligand>
        <name>substrate</name>
    </ligand>
</feature>
<feature type="binding site" evidence="1">
    <location>
        <position position="327"/>
    </location>
    <ligand>
        <name>substrate</name>
    </ligand>
</feature>
<feature type="binding site" evidence="1">
    <location>
        <position position="379"/>
    </location>
    <ligand>
        <name>substrate</name>
    </ligand>
</feature>
<feature type="site" description="Transition state stabilizer" evidence="1">
    <location>
        <position position="334"/>
    </location>
</feature>
<feature type="modified residue" description="N-acetylproline" evidence="1">
    <location>
        <position position="3"/>
    </location>
</feature>
<feature type="modified residue" description="N6,N6,N6-trimethyllysine" evidence="1">
    <location>
        <position position="14"/>
    </location>
</feature>
<feature type="modified residue" description="N6-carboxylysine" evidence="1">
    <location>
        <position position="201"/>
    </location>
</feature>
<feature type="disulfide bond" description="Interchain; in linked form" evidence="1">
    <location>
        <position position="247"/>
    </location>
</feature>
<feature type="non-terminal residue">
    <location>
        <position position="453"/>
    </location>
</feature>
<dbReference type="EC" id="4.1.1.39" evidence="1"/>
<dbReference type="EMBL" id="X81091">
    <property type="protein sequence ID" value="CAA56997.1"/>
    <property type="molecule type" value="Genomic_DNA"/>
</dbReference>
<dbReference type="SMR" id="Q32256"/>
<dbReference type="GO" id="GO:0009507">
    <property type="term" value="C:chloroplast"/>
    <property type="evidence" value="ECO:0007669"/>
    <property type="project" value="UniProtKB-SubCell"/>
</dbReference>
<dbReference type="GO" id="GO:0000287">
    <property type="term" value="F:magnesium ion binding"/>
    <property type="evidence" value="ECO:0007669"/>
    <property type="project" value="InterPro"/>
</dbReference>
<dbReference type="GO" id="GO:0004497">
    <property type="term" value="F:monooxygenase activity"/>
    <property type="evidence" value="ECO:0007669"/>
    <property type="project" value="UniProtKB-KW"/>
</dbReference>
<dbReference type="GO" id="GO:0016984">
    <property type="term" value="F:ribulose-bisphosphate carboxylase activity"/>
    <property type="evidence" value="ECO:0007669"/>
    <property type="project" value="UniProtKB-EC"/>
</dbReference>
<dbReference type="GO" id="GO:0009853">
    <property type="term" value="P:photorespiration"/>
    <property type="evidence" value="ECO:0007669"/>
    <property type="project" value="UniProtKB-KW"/>
</dbReference>
<dbReference type="GO" id="GO:0019253">
    <property type="term" value="P:reductive pentose-phosphate cycle"/>
    <property type="evidence" value="ECO:0007669"/>
    <property type="project" value="UniProtKB-KW"/>
</dbReference>
<dbReference type="CDD" id="cd08212">
    <property type="entry name" value="RuBisCO_large_I"/>
    <property type="match status" value="1"/>
</dbReference>
<dbReference type="FunFam" id="3.20.20.110:FF:000003">
    <property type="entry name" value="Ribulose bisphosphate carboxylase large chain"/>
    <property type="match status" value="1"/>
</dbReference>
<dbReference type="FunFam" id="3.30.70.150:FF:000001">
    <property type="entry name" value="Ribulose bisphosphate carboxylase large chain"/>
    <property type="match status" value="1"/>
</dbReference>
<dbReference type="Gene3D" id="3.20.20.110">
    <property type="entry name" value="Ribulose bisphosphate carboxylase, large subunit, C-terminal domain"/>
    <property type="match status" value="1"/>
</dbReference>
<dbReference type="Gene3D" id="3.30.70.150">
    <property type="entry name" value="RuBisCO large subunit, N-terminal domain"/>
    <property type="match status" value="1"/>
</dbReference>
<dbReference type="HAMAP" id="MF_01338">
    <property type="entry name" value="RuBisCO_L_type1"/>
    <property type="match status" value="1"/>
</dbReference>
<dbReference type="InterPro" id="IPR033966">
    <property type="entry name" value="RuBisCO"/>
</dbReference>
<dbReference type="InterPro" id="IPR020878">
    <property type="entry name" value="RuBisCo_large_chain_AS"/>
</dbReference>
<dbReference type="InterPro" id="IPR000685">
    <property type="entry name" value="RuBisCO_lsu_C"/>
</dbReference>
<dbReference type="InterPro" id="IPR036376">
    <property type="entry name" value="RuBisCO_lsu_C_sf"/>
</dbReference>
<dbReference type="InterPro" id="IPR017443">
    <property type="entry name" value="RuBisCO_lsu_fd_N"/>
</dbReference>
<dbReference type="InterPro" id="IPR036422">
    <property type="entry name" value="RuBisCO_lsu_N_sf"/>
</dbReference>
<dbReference type="InterPro" id="IPR020888">
    <property type="entry name" value="RuBisCO_lsuI"/>
</dbReference>
<dbReference type="NCBIfam" id="NF003252">
    <property type="entry name" value="PRK04208.1"/>
    <property type="match status" value="1"/>
</dbReference>
<dbReference type="PANTHER" id="PTHR42704">
    <property type="entry name" value="RIBULOSE BISPHOSPHATE CARBOXYLASE"/>
    <property type="match status" value="1"/>
</dbReference>
<dbReference type="PANTHER" id="PTHR42704:SF15">
    <property type="entry name" value="RIBULOSE BISPHOSPHATE CARBOXYLASE LARGE CHAIN"/>
    <property type="match status" value="1"/>
</dbReference>
<dbReference type="Pfam" id="PF00016">
    <property type="entry name" value="RuBisCO_large"/>
    <property type="match status" value="1"/>
</dbReference>
<dbReference type="Pfam" id="PF02788">
    <property type="entry name" value="RuBisCO_large_N"/>
    <property type="match status" value="1"/>
</dbReference>
<dbReference type="SFLD" id="SFLDG01052">
    <property type="entry name" value="RuBisCO"/>
    <property type="match status" value="1"/>
</dbReference>
<dbReference type="SFLD" id="SFLDS00014">
    <property type="entry name" value="RuBisCO"/>
    <property type="match status" value="1"/>
</dbReference>
<dbReference type="SFLD" id="SFLDG00301">
    <property type="entry name" value="RuBisCO-like_proteins"/>
    <property type="match status" value="1"/>
</dbReference>
<dbReference type="SUPFAM" id="SSF51649">
    <property type="entry name" value="RuBisCo, C-terminal domain"/>
    <property type="match status" value="1"/>
</dbReference>
<dbReference type="SUPFAM" id="SSF54966">
    <property type="entry name" value="RuBisCO, large subunit, small (N-terminal) domain"/>
    <property type="match status" value="1"/>
</dbReference>
<dbReference type="PROSITE" id="PS00157">
    <property type="entry name" value="RUBISCO_LARGE"/>
    <property type="match status" value="1"/>
</dbReference>
<geneLocation type="chloroplast"/>
<reference key="1">
    <citation type="journal article" date="1995" name="J. Mol. Evol.">
        <title>Comparison of the evolution of ribulose-1, 5-biphosphate carboxylase (rbcL) and atpB-rbcL noncoding spacer sequences in a recent plant group, the tribe Rubieae (Rubiaceae).</title>
        <authorList>
            <person name="Manen J.F."/>
            <person name="Natali A."/>
        </authorList>
    </citation>
    <scope>NUCLEOTIDE SEQUENCE [GENOMIC DNA]</scope>
</reference>
<gene>
    <name evidence="1" type="primary">rbcL</name>
</gene>